<accession>Q19975</accession>
<evidence type="ECO:0000255" key="1"/>
<evidence type="ECO:0000305" key="2"/>
<keyword id="KW-0472">Membrane</keyword>
<keyword id="KW-1185">Reference proteome</keyword>
<keyword id="KW-0812">Transmembrane</keyword>
<keyword id="KW-1133">Transmembrane helix</keyword>
<proteinExistence type="inferred from homology"/>
<gene>
    <name type="primary">srd-34</name>
    <name type="ORF">F32G8.1</name>
</gene>
<sequence>MDVSNENANSSIMTMEANFFMCIIVVFTQVRPVNNPESSAYLFSGFCRHTHKNACFFSFDFFQLVFDASSFAIPATLFYKYTKVTNINMKNITKNQIRMILLSSYLLSLIVGVIYVITYEPDESLEVASETRKFHSTQYDFRYYADITGYQKHFWSWLATNLNMISIFVPPIMSIVFIRLIQIKLNSLKHLFTDKTAAQAKKFDLALTIQTLVPAVCVIPIYIAHLILENYDLPFLSNFEKVLYMMLSLPTAIDAFIVIVTITPYQKAFIAFFKDTFCGKKVSPAIVRRNNISAVSIF</sequence>
<reference key="1">
    <citation type="journal article" date="1998" name="Science">
        <title>Genome sequence of the nematode C. elegans: a platform for investigating biology.</title>
        <authorList>
            <consortium name="The C. elegans sequencing consortium"/>
        </authorList>
    </citation>
    <scope>NUCLEOTIDE SEQUENCE [LARGE SCALE GENOMIC DNA]</scope>
    <source>
        <strain>Bristol N2</strain>
    </source>
</reference>
<name>SRD34_CAEEL</name>
<protein>
    <recommendedName>
        <fullName>Serpentine receptor class delta-34</fullName>
        <shortName>Protein srd-34</shortName>
    </recommendedName>
</protein>
<feature type="chain" id="PRO_0000104521" description="Serpentine receptor class delta-34">
    <location>
        <begin position="1"/>
        <end position="298"/>
    </location>
</feature>
<feature type="transmembrane region" description="Helical" evidence="1">
    <location>
        <begin position="10"/>
        <end position="30"/>
    </location>
</feature>
<feature type="transmembrane region" description="Helical" evidence="1">
    <location>
        <begin position="54"/>
        <end position="74"/>
    </location>
</feature>
<feature type="transmembrane region" description="Helical" evidence="1">
    <location>
        <begin position="99"/>
        <end position="119"/>
    </location>
</feature>
<feature type="transmembrane region" description="Helical" evidence="1">
    <location>
        <begin position="158"/>
        <end position="178"/>
    </location>
</feature>
<feature type="transmembrane region" description="Helical" evidence="1">
    <location>
        <begin position="207"/>
        <end position="227"/>
    </location>
</feature>
<feature type="transmembrane region" description="Helical" evidence="1">
    <location>
        <begin position="242"/>
        <end position="262"/>
    </location>
</feature>
<organism>
    <name type="scientific">Caenorhabditis elegans</name>
    <dbReference type="NCBI Taxonomy" id="6239"/>
    <lineage>
        <taxon>Eukaryota</taxon>
        <taxon>Metazoa</taxon>
        <taxon>Ecdysozoa</taxon>
        <taxon>Nematoda</taxon>
        <taxon>Chromadorea</taxon>
        <taxon>Rhabditida</taxon>
        <taxon>Rhabditina</taxon>
        <taxon>Rhabditomorpha</taxon>
        <taxon>Rhabditoidea</taxon>
        <taxon>Rhabditidae</taxon>
        <taxon>Peloderinae</taxon>
        <taxon>Caenorhabditis</taxon>
    </lineage>
</organism>
<dbReference type="EMBL" id="Z72509">
    <property type="protein sequence ID" value="CAA96645.2"/>
    <property type="molecule type" value="Genomic_DNA"/>
</dbReference>
<dbReference type="PIR" id="T21665">
    <property type="entry name" value="T21665"/>
</dbReference>
<dbReference type="RefSeq" id="NP_505705.2">
    <property type="nucleotide sequence ID" value="NM_073304.2"/>
</dbReference>
<dbReference type="SMR" id="Q19975"/>
<dbReference type="FunCoup" id="Q19975">
    <property type="interactions" value="280"/>
</dbReference>
<dbReference type="PaxDb" id="6239-F32G8.1"/>
<dbReference type="EnsemblMetazoa" id="F32G8.1.1">
    <property type="protein sequence ID" value="F32G8.1.1"/>
    <property type="gene ID" value="WBGene00005112"/>
</dbReference>
<dbReference type="GeneID" id="185210"/>
<dbReference type="KEGG" id="cel:CELE_F32G8.1"/>
<dbReference type="UCSC" id="F32G8.1">
    <property type="organism name" value="c. elegans"/>
</dbReference>
<dbReference type="AGR" id="WB:WBGene00005112"/>
<dbReference type="CTD" id="185210"/>
<dbReference type="WormBase" id="F32G8.1">
    <property type="protein sequence ID" value="CE45567"/>
    <property type="gene ID" value="WBGene00005112"/>
    <property type="gene designation" value="srd-34"/>
</dbReference>
<dbReference type="eggNOG" id="ENOG502TGCK">
    <property type="taxonomic scope" value="Eukaryota"/>
</dbReference>
<dbReference type="GeneTree" id="ENSGT00970000195825"/>
<dbReference type="HOGENOM" id="CLU_057924_1_0_1"/>
<dbReference type="InParanoid" id="Q19975"/>
<dbReference type="OMA" id="CVIPVYT"/>
<dbReference type="OrthoDB" id="5850826at2759"/>
<dbReference type="PhylomeDB" id="Q19975"/>
<dbReference type="PRO" id="PR:Q19975"/>
<dbReference type="Proteomes" id="UP000001940">
    <property type="component" value="Chromosome V"/>
</dbReference>
<dbReference type="GO" id="GO:0016020">
    <property type="term" value="C:membrane"/>
    <property type="evidence" value="ECO:0007669"/>
    <property type="project" value="UniProtKB-SubCell"/>
</dbReference>
<dbReference type="Gene3D" id="1.20.1070.10">
    <property type="entry name" value="Rhodopsin 7-helix transmembrane proteins"/>
    <property type="match status" value="1"/>
</dbReference>
<dbReference type="InterPro" id="IPR019421">
    <property type="entry name" value="7TM_GPCR_serpentine_rcpt_Srd"/>
</dbReference>
<dbReference type="InterPro" id="IPR050920">
    <property type="entry name" value="Nematode_rcpt-like_delta"/>
</dbReference>
<dbReference type="PANTHER" id="PTHR22945:SF8">
    <property type="entry name" value="SERPENTINE RECEPTOR CLASS DELTA-34"/>
    <property type="match status" value="1"/>
</dbReference>
<dbReference type="PANTHER" id="PTHR22945">
    <property type="entry name" value="SERPENTINE RECEPTOR, CLASS D DELTA"/>
    <property type="match status" value="1"/>
</dbReference>
<dbReference type="Pfam" id="PF10317">
    <property type="entry name" value="7TM_GPCR_Srd"/>
    <property type="match status" value="1"/>
</dbReference>
<dbReference type="SUPFAM" id="SSF81321">
    <property type="entry name" value="Family A G protein-coupled receptor-like"/>
    <property type="match status" value="1"/>
</dbReference>
<comment type="subcellular location">
    <subcellularLocation>
        <location evidence="2">Membrane</location>
        <topology evidence="2">Multi-pass membrane protein</topology>
    </subcellularLocation>
</comment>
<comment type="similarity">
    <text evidence="2">Belongs to the nematode receptor-like protein srd family.</text>
</comment>